<proteinExistence type="inferred from homology"/>
<evidence type="ECO:0000250" key="1">
    <source>
        <dbReference type="UniProtKB" id="P04798"/>
    </source>
</evidence>
<evidence type="ECO:0000255" key="2"/>
<evidence type="ECO:0000269" key="3">
    <source>
    </source>
</evidence>
<evidence type="ECO:0000303" key="4">
    <source>
    </source>
</evidence>
<evidence type="ECO:0000305" key="5"/>
<evidence type="ECO:0000305" key="6">
    <source>
    </source>
</evidence>
<dbReference type="EC" id="1.-.-.-" evidence="6"/>
<dbReference type="EMBL" id="PP505398">
    <property type="protein sequence ID" value="WYC13317.1"/>
    <property type="molecule type" value="Genomic_DNA"/>
</dbReference>
<dbReference type="SMR" id="P9WEI9"/>
<dbReference type="UniPathway" id="UPA00213"/>
<dbReference type="GO" id="GO:0016020">
    <property type="term" value="C:membrane"/>
    <property type="evidence" value="ECO:0007669"/>
    <property type="project" value="UniProtKB-SubCell"/>
</dbReference>
<dbReference type="GO" id="GO:0020037">
    <property type="term" value="F:heme binding"/>
    <property type="evidence" value="ECO:0007669"/>
    <property type="project" value="InterPro"/>
</dbReference>
<dbReference type="GO" id="GO:0005506">
    <property type="term" value="F:iron ion binding"/>
    <property type="evidence" value="ECO:0007669"/>
    <property type="project" value="InterPro"/>
</dbReference>
<dbReference type="GO" id="GO:0004497">
    <property type="term" value="F:monooxygenase activity"/>
    <property type="evidence" value="ECO:0007669"/>
    <property type="project" value="UniProtKB-KW"/>
</dbReference>
<dbReference type="GO" id="GO:0016705">
    <property type="term" value="F:oxidoreductase activity, acting on paired donors, with incorporation or reduction of molecular oxygen"/>
    <property type="evidence" value="ECO:0007669"/>
    <property type="project" value="InterPro"/>
</dbReference>
<dbReference type="CDD" id="cd11069">
    <property type="entry name" value="CYP_FUM15-like"/>
    <property type="match status" value="1"/>
</dbReference>
<dbReference type="Gene3D" id="1.10.630.10">
    <property type="entry name" value="Cytochrome P450"/>
    <property type="match status" value="1"/>
</dbReference>
<dbReference type="InterPro" id="IPR001128">
    <property type="entry name" value="Cyt_P450"/>
</dbReference>
<dbReference type="InterPro" id="IPR002401">
    <property type="entry name" value="Cyt_P450_E_grp-I"/>
</dbReference>
<dbReference type="InterPro" id="IPR036396">
    <property type="entry name" value="Cyt_P450_sf"/>
</dbReference>
<dbReference type="InterPro" id="IPR050121">
    <property type="entry name" value="Cytochrome_P450_monoxygenase"/>
</dbReference>
<dbReference type="PANTHER" id="PTHR24305">
    <property type="entry name" value="CYTOCHROME P450"/>
    <property type="match status" value="1"/>
</dbReference>
<dbReference type="PANTHER" id="PTHR24305:SF166">
    <property type="entry name" value="CYTOCHROME P450 12A4, MITOCHONDRIAL-RELATED"/>
    <property type="match status" value="1"/>
</dbReference>
<dbReference type="Pfam" id="PF00067">
    <property type="entry name" value="p450"/>
    <property type="match status" value="1"/>
</dbReference>
<dbReference type="PRINTS" id="PR00463">
    <property type="entry name" value="EP450I"/>
</dbReference>
<dbReference type="PRINTS" id="PR00385">
    <property type="entry name" value="P450"/>
</dbReference>
<dbReference type="SUPFAM" id="SSF48264">
    <property type="entry name" value="Cytochrome P450"/>
    <property type="match status" value="1"/>
</dbReference>
<sequence>MTPVSEIGTLDVLIFLVFLWLLSKLVGRLVRRGRTTPLRGPANKSLFFGLTRYLNEADDPGAIYESWAAEYGPAFRVPSVLGSHRIMICDAKAIAHFYSRETFGYVQTSLARSAIKNLFGRGLIWSEGESHKRQRKALSPAFSNAAIRRLTSVFFDSSYKMKAAWDSILESNPNNSVIDVQKWMNHISLDSIGIAGFSHDFGSLDGKHSDVAAVFDSFGTSKPSYFSMVIFLLAQVFPILLKLPTNRNLLTNKLRKTMSEIADVLLDRTRKEKEGKMGIVEEKSIIGLLIKAESAETELRMSQEEILAQMNVLLLAGYETTSISLTWALIELSKKPEKQAKLREELLSQFTSTDPTWEQLTSGLPYLDSVVHEVLRLHPPLGETSRVAAEDDIMPLSTPLVTRSGQTVSSIAIGKGTVVGVPIRCMNRSEVLWGKDAKEFIPERWLEPGFGENNEIQGHRHLLTFVDGPRTCLGKGFAIAEFKAALSVLIRSYTFEFPGPNGAVPKIERHRSILPRPKVEGQDGAKVPLRVRRVE</sequence>
<gene>
    <name evidence="4" type="primary">claP</name>
</gene>
<reference key="1">
    <citation type="journal article" date="2024" name="J. Am. Chem. Soc.">
        <title>Two cytochrome P450 enzymes form the tricyclic nested skeleton of meroterpenoids by sequential oxidative reactions.</title>
        <authorList>
            <person name="Yang E."/>
            <person name="Yao Y."/>
            <person name="Su H."/>
            <person name="Sun Z."/>
            <person name="Gao S.S."/>
            <person name="Sureram S."/>
            <person name="Kittakoop P."/>
            <person name="Fan K."/>
            <person name="Pan Y."/>
            <person name="Xu X."/>
            <person name="Sun Z.H."/>
            <person name="Ma G."/>
            <person name="Liu G."/>
        </authorList>
    </citation>
    <scope>NUCLEOTIDE SEQUENCE [GENOMIC DNA]</scope>
    <scope>FUNCTION</scope>
    <scope>PATHWAY</scope>
</reference>
<protein>
    <recommendedName>
        <fullName evidence="4">Cytochrome P450 monooxygenase claP</fullName>
        <ecNumber evidence="6">1.-.-.-</ecNumber>
    </recommendedName>
    <alternativeName>
        <fullName evidence="4">Clavilactone A biosynthesis cluster protein P</fullName>
    </alternativeName>
</protein>
<name>CLAP_AMPCV</name>
<comment type="function">
    <text evidence="3">Cytochrome P450 monooxygenase; part of the gene cluster that mediates the biosynthesis of clavilactone A, a meroterpenoid that features a unique benzo-fused ten-membered carbocyclic ring unit with an alpha,beta-epoxy-gamma-lactone moiety, forming an intriguing 10/5/3 tricyclic nested skeleton (PubMed:38602511). Cytochrome P450 monooxygenases claO, claP, claQ, claU, and claW are close orthologs, suggesting that a redundant function or pseudogenes are present in the cla cluster. These monoxygenases are not involved in clavilactone A biosynthesis nor its modification (PubMed:38602511). ClaR, ClaS and ClaT are sufficient to produce clavilactone A. The biosynthesis begins with the prenyltransferase claS that transfers geranyl pyrophosphate (GPP) to hydroquinone to produces geranylhydroquinone. The cytochrome P450 monooxygenase claR then catalyzes the diradical coupling reaction between the intramolecular hydroquinone and allyl moieties to form the benzo-fused ten-membered carbocyclic ring unit of wigantol. Finally the cytochrome P450 monooxygenase claT exquisitely and stereoselectively assembles the alpha,beta-epoxy-gamma-lactone moiety, producing clavilactone A via arnebinol A (PubMed:38602511).</text>
</comment>
<comment type="cofactor">
    <cofactor evidence="1">
        <name>heme</name>
        <dbReference type="ChEBI" id="CHEBI:30413"/>
    </cofactor>
</comment>
<comment type="pathway">
    <text evidence="6">Secondary metabolite biosynthesis; terpenoid biosynthesis.</text>
</comment>
<comment type="subcellular location">
    <subcellularLocation>
        <location evidence="2">Membrane</location>
        <topology evidence="2">Multi-pass membrane protein</topology>
    </subcellularLocation>
</comment>
<comment type="similarity">
    <text evidence="5">Belongs to the cytochrome P450 family.</text>
</comment>
<accession>P9WEI9</accession>
<keyword id="KW-0349">Heme</keyword>
<keyword id="KW-0408">Iron</keyword>
<keyword id="KW-0472">Membrane</keyword>
<keyword id="KW-0479">Metal-binding</keyword>
<keyword id="KW-0503">Monooxygenase</keyword>
<keyword id="KW-0560">Oxidoreductase</keyword>
<keyword id="KW-0812">Transmembrane</keyword>
<keyword id="KW-1133">Transmembrane helix</keyword>
<feature type="chain" id="PRO_0000461436" description="Cytochrome P450 monooxygenase claP">
    <location>
        <begin position="1"/>
        <end position="535"/>
    </location>
</feature>
<feature type="transmembrane region" description="Helical" evidence="2">
    <location>
        <begin position="7"/>
        <end position="27"/>
    </location>
</feature>
<feature type="transmembrane region" description="Helical" evidence="2">
    <location>
        <begin position="225"/>
        <end position="245"/>
    </location>
</feature>
<feature type="binding site" description="axial binding residue" evidence="1">
    <location>
        <position position="472"/>
    </location>
    <ligand>
        <name>heme</name>
        <dbReference type="ChEBI" id="CHEBI:30413"/>
    </ligand>
    <ligandPart>
        <name>Fe</name>
        <dbReference type="ChEBI" id="CHEBI:18248"/>
    </ligandPart>
</feature>
<organism>
    <name type="scientific">Ampulloclitocybe clavipes</name>
    <name type="common">Club foot</name>
    <name type="synonym">Clitocybe clavipes</name>
    <dbReference type="NCBI Taxonomy" id="56467"/>
    <lineage>
        <taxon>Eukaryota</taxon>
        <taxon>Fungi</taxon>
        <taxon>Dikarya</taxon>
        <taxon>Basidiomycota</taxon>
        <taxon>Agaricomycotina</taxon>
        <taxon>Agaricomycetes</taxon>
        <taxon>Agaricomycetidae</taxon>
        <taxon>Agaricales</taxon>
        <taxon>Hygrophoraceae</taxon>
        <taxon>Ampulloclitocybe</taxon>
    </lineage>
</organism>